<organism>
    <name type="scientific">Pseudomonas fluorescens</name>
    <dbReference type="NCBI Taxonomy" id="294"/>
    <lineage>
        <taxon>Bacteria</taxon>
        <taxon>Pseudomonadati</taxon>
        <taxon>Pseudomonadota</taxon>
        <taxon>Gammaproteobacteria</taxon>
        <taxon>Pseudomonadales</taxon>
        <taxon>Pseudomonadaceae</taxon>
        <taxon>Pseudomonas</taxon>
    </lineage>
</organism>
<gene>
    <name evidence="7" type="primary">fapB</name>
    <name evidence="8" type="ORF">HZ99_04085</name>
    <name evidence="7" type="ORF">PSUK4_00020</name>
</gene>
<evidence type="ECO:0000255" key="1"/>
<evidence type="ECO:0000269" key="2">
    <source>
    </source>
</evidence>
<evidence type="ECO:0000269" key="3">
    <source>
    </source>
</evidence>
<evidence type="ECO:0000269" key="4">
    <source>
    </source>
</evidence>
<evidence type="ECO:0000269" key="5">
    <source>
    </source>
</evidence>
<evidence type="ECO:0000269" key="6">
    <source>
    </source>
</evidence>
<evidence type="ECO:0000303" key="7">
    <source>
    </source>
</evidence>
<evidence type="ECO:0000303" key="8">
    <source>
    </source>
</evidence>
<evidence type="ECO:0000305" key="9"/>
<evidence type="ECO:0000305" key="10">
    <source>
    </source>
</evidence>
<evidence type="ECO:0000305" key="11">
    <source>
    </source>
</evidence>
<proteinExistence type="evidence at protein level"/>
<protein>
    <recommendedName>
        <fullName evidence="9">Functional amyloid subunit FapB</fullName>
    </recommendedName>
    <alternativeName>
        <fullName evidence="9">Fibril amyloid subunit FapB</fullName>
    </alternativeName>
</protein>
<keyword id="KW-0034">Amyloid</keyword>
<keyword id="KW-0130">Cell adhesion</keyword>
<keyword id="KW-0903">Direct protein sequencing</keyword>
<keyword id="KW-0281">Fimbrium</keyword>
<keyword id="KW-0677">Repeat</keyword>
<keyword id="KW-0964">Secreted</keyword>
<keyword id="KW-0732">Signal</keyword>
<dbReference type="EMBL" id="ACOQ01000001">
    <property type="protein sequence ID" value="EEP64550.1"/>
    <property type="molecule type" value="Genomic_DNA"/>
</dbReference>
<dbReference type="EMBL" id="CP008896">
    <property type="protein sequence ID" value="AIG01390.1"/>
    <property type="molecule type" value="Genomic_DNA"/>
</dbReference>
<dbReference type="RefSeq" id="WP_008603556.1">
    <property type="nucleotide sequence ID" value="NZ_CP008896.1"/>
</dbReference>
<dbReference type="KEGG" id="pfn:HZ99_04085"/>
<dbReference type="GO" id="GO:0005576">
    <property type="term" value="C:extracellular region"/>
    <property type="evidence" value="ECO:0007669"/>
    <property type="project" value="UniProtKB-SubCell"/>
</dbReference>
<dbReference type="GO" id="GO:0009289">
    <property type="term" value="C:pilus"/>
    <property type="evidence" value="ECO:0007669"/>
    <property type="project" value="UniProtKB-SubCell"/>
</dbReference>
<dbReference type="GO" id="GO:0007155">
    <property type="term" value="P:cell adhesion"/>
    <property type="evidence" value="ECO:0007669"/>
    <property type="project" value="UniProtKB-KW"/>
</dbReference>
<name>FAPB_PSEFL</name>
<sequence>MTHSWLLLTVLGCSAAMADSNNQALIDNAGKQYTGVLSVNQAAGNQHQQINSRAISLGGQASDALIQKLDGKVDPSLNASAAIQGSAFSNGNGILGVNQSAGANNQMINAVRISTGPQSVDDNVLSQQNMTLLPDSRSPSTTGSRQVVTSDQAFTGSRGVVQVNQSAGVGNRMANTLGVTIK</sequence>
<reference key="1">
    <citation type="journal article" date="2010" name="Mol. Microbiol.">
        <title>Functional amyloid in Pseudomonas.</title>
        <authorList>
            <person name="Dueholm M.S."/>
            <person name="Petersen S.V."/>
            <person name="Soenderkaer M."/>
            <person name="Larsen P."/>
            <person name="Christiansen G."/>
            <person name="Hein K.L."/>
            <person name="Enghild J.J."/>
            <person name="Nielsen J.L."/>
            <person name="Nielsen K.L."/>
            <person name="Nielsen P.H."/>
            <person name="Otzen D.E."/>
        </authorList>
    </citation>
    <scope>NUCLEOTIDE SEQUENCE [GENOMIC DNA]</scope>
    <scope>FUNCTION</scope>
    <scope>REPEAT</scope>
    <source>
        <strain>DSM 29051 / UK4</strain>
    </source>
</reference>
<reference key="2">
    <citation type="journal article" date="2014" name="Genome Announc.">
        <title>Complete Genome Sequence of Pseudomonas sp. UK4, a Model Organism for Studies of Functional Amyloids in Pseudomonas.</title>
        <authorList>
            <person name="Dueholm M.S."/>
            <person name="Danielsen H.N."/>
            <person name="Nielsen P.H."/>
        </authorList>
    </citation>
    <scope>NUCLEOTIDE SEQUENCE [LARGE SCALE GENOMIC DNA]</scope>
    <source>
        <strain>DSM 29051 / UK4</strain>
    </source>
</reference>
<reference key="3">
    <citation type="journal article" date="2017" name="Nat. Commun.">
        <title>A new class of hybrid secretion system is employed in Pseudomonas amyloid biogenesis.</title>
        <authorList>
            <person name="Rouse S.L."/>
            <person name="Hawthorne W.J."/>
            <person name="Berry J.L."/>
            <person name="Chorev D.S."/>
            <person name="Ionescu S.A."/>
            <person name="Lambert S."/>
            <person name="Stylianou F."/>
            <person name="Ewert W."/>
            <person name="Mackie U."/>
            <person name="Morgan R.M.L."/>
            <person name="Otzen D."/>
            <person name="Herbst F.A."/>
            <person name="Nielsen P.H."/>
            <person name="Dueholm M."/>
            <person name="Bayley H."/>
            <person name="Robinson C.V."/>
            <person name="Hare S."/>
            <person name="Matthews S."/>
        </authorList>
    </citation>
    <scope>PROTEIN SEQUENCE OF 19-68; 73-88; 93-137 AND 146-182</scope>
    <scope>FUNCTION</scope>
    <scope>SUBCELLULAR LOCATION</scope>
    <source>
        <strain>DSM 29051 / UK4</strain>
    </source>
</reference>
<reference key="4">
    <citation type="journal article" date="2013" name="MicrobiologyOpen">
        <title>Expression of Fap amyloids in Pseudomonas aeruginosa, P. fluorescens, and P. putida results in aggregation and increased biofilm formation.</title>
        <authorList>
            <person name="Dueholm M.S."/>
            <person name="Soendergaard M.T."/>
            <person name="Nilsson M."/>
            <person name="Christiansen G."/>
            <person name="Stensballe A."/>
            <person name="Overgaard M.T."/>
            <person name="Givskov M."/>
            <person name="Tolker-Nielsen T."/>
            <person name="Otzen D.E."/>
            <person name="Nielsen P.H."/>
        </authorList>
    </citation>
    <scope>FUNCTION</scope>
    <scope>SUBUNIT</scope>
    <scope>SUBCELLULAR LOCATION</scope>
    <scope>DISRUPTION PHENOTYPE</scope>
    <source>
        <strain>DSM 29051 / UK4</strain>
    </source>
</reference>
<reference key="5">
    <citation type="journal article" date="2015" name="Front. Microbiol.">
        <title>Functional bacterial amyloid increases Pseudomonas biofilm hydrophobicity and stiffness.</title>
        <authorList>
            <person name="Zeng G."/>
            <person name="Vad B.S."/>
            <person name="Dueholm M.S."/>
            <person name="Christiansen G."/>
            <person name="Nilsson M."/>
            <person name="Tolker-Nielsen T."/>
            <person name="Nielsen P.H."/>
            <person name="Meyer R.L."/>
            <person name="Otzen D.E."/>
        </authorList>
    </citation>
    <scope>FUNCTION</scope>
    <scope>DISRUPTION PHENOTYPE</scope>
    <source>
        <strain>DSM 29051 / UK4</strain>
    </source>
</reference>
<reference key="6">
    <citation type="journal article" date="2023" name="J. Mol. Biol.">
        <title>FapA is an Intrinsically Disordered Chaperone for Pseudomonas Functional Amyloid FapC.</title>
        <authorList>
            <person name="Rasmussen H.O."/>
            <person name="Kumar A."/>
            <person name="Shin B."/>
            <person name="Stylianou F."/>
            <person name="Sewell L."/>
            <person name="Xu Y."/>
            <person name="Otzen D.E."/>
            <person name="Pedersen J.S."/>
            <person name="Matthews S.J."/>
        </authorList>
    </citation>
    <scope>FUNCTION</scope>
    <scope>SUBUNIT</scope>
    <source>
        <strain>DSM 29051 / UK4</strain>
    </source>
</reference>
<accession>P0DXF4</accession>
<comment type="function">
    <text evidence="2 3 4 5 6 11">A minor component of the functional amyloid in this bacterium (PubMed:20572935, PubMed:23504942). Probably nucleates fibril formation; FapB nucleates fibrillation its own, FapA inhibits FapB fibril elongation (PubMed:36368411). Upon overexpression of the endogenous six-gene locus (fapA-fapF) in situ, cells form large clumps during liquid growth, make large amounts of biofilm and produce amyloid fibrils (PubMed:23504942, PubMed:26500638). Expression of the 6 gene operon in E.coli strain BL21(DE3) induces flocculation and biofilm formation with copious extracellular fibrils (PubMed:20572935, PubMed:28811582).</text>
</comment>
<comment type="subunit">
    <text evidence="3 4">Forms fibrils in vitro; in the presence of FapA the fibrils are slightly narrower (PubMed:36368411). A minor component of purified amyloid fibrils. Fibrils are resistant to boiling in 2% (weight/vol) SDS and require &gt;90% (vol/vol) formic acid to dissolve.</text>
</comment>
<comment type="subcellular location">
    <subcellularLocation>
        <location evidence="3">Fimbrium</location>
    </subcellularLocation>
    <subcellularLocation>
        <location evidence="3 5">Secreted</location>
    </subcellularLocation>
    <text evidence="3 5">Part of an extracellular amyloid fibril (PubMed:23504942). Secreted through the inner membrane by the Sec pathway, exported from the periplasm by FapF (PubMed:28811582).</text>
</comment>
<comment type="disruption phenotype">
    <text evidence="3 4">Deletion of just fapB in an overexpressing strain yields cells without amyloid fibrils (PubMed:26500638). Deletion of the entire fapA-fapF six-gene locus shows no visible growth phenotype (PubMed:23504942, PubMed:26500638).</text>
</comment>
<comment type="similarity">
    <text evidence="10">Belongs to the FapB/FapC family.</text>
</comment>
<feature type="signal peptide" evidence="5">
    <location>
        <begin position="1"/>
        <end position="18"/>
    </location>
</feature>
<feature type="chain" id="PRO_0000461514" description="Functional amyloid subunit FapB" evidence="1">
    <location>
        <begin position="19"/>
        <end position="182"/>
    </location>
</feature>
<feature type="repeat" description="FapB_R1">
    <location>
        <begin position="22"/>
        <end position="58"/>
    </location>
</feature>
<feature type="repeat" description="FapB_R2">
    <location>
        <begin position="80"/>
        <end position="114"/>
    </location>
</feature>
<feature type="repeat" description="FapB_R3">
    <location>
        <begin position="150"/>
        <end position="180"/>
    </location>
</feature>